<keyword id="KW-0175">Coiled coil</keyword>
<keyword id="KW-0539">Nucleus</keyword>
<keyword id="KW-1185">Reference proteome</keyword>
<keyword id="KW-0698">rRNA processing</keyword>
<organism>
    <name type="scientific">Aspergillus niger (strain ATCC MYA-4892 / CBS 513.88 / FGSC A1513)</name>
    <dbReference type="NCBI Taxonomy" id="425011"/>
    <lineage>
        <taxon>Eukaryota</taxon>
        <taxon>Fungi</taxon>
        <taxon>Dikarya</taxon>
        <taxon>Ascomycota</taxon>
        <taxon>Pezizomycotina</taxon>
        <taxon>Eurotiomycetes</taxon>
        <taxon>Eurotiomycetidae</taxon>
        <taxon>Eurotiales</taxon>
        <taxon>Aspergillaceae</taxon>
        <taxon>Aspergillus</taxon>
        <taxon>Aspergillus subgen. Circumdati</taxon>
    </lineage>
</organism>
<reference key="1">
    <citation type="journal article" date="2007" name="Nat. Biotechnol.">
        <title>Genome sequencing and analysis of the versatile cell factory Aspergillus niger CBS 513.88.</title>
        <authorList>
            <person name="Pel H.J."/>
            <person name="de Winde J.H."/>
            <person name="Archer D.B."/>
            <person name="Dyer P.S."/>
            <person name="Hofmann G."/>
            <person name="Schaap P.J."/>
            <person name="Turner G."/>
            <person name="de Vries R.P."/>
            <person name="Albang R."/>
            <person name="Albermann K."/>
            <person name="Andersen M.R."/>
            <person name="Bendtsen J.D."/>
            <person name="Benen J.A.E."/>
            <person name="van den Berg M."/>
            <person name="Breestraat S."/>
            <person name="Caddick M.X."/>
            <person name="Contreras R."/>
            <person name="Cornell M."/>
            <person name="Coutinho P.M."/>
            <person name="Danchin E.G.J."/>
            <person name="Debets A.J.M."/>
            <person name="Dekker P."/>
            <person name="van Dijck P.W.M."/>
            <person name="van Dijk A."/>
            <person name="Dijkhuizen L."/>
            <person name="Driessen A.J.M."/>
            <person name="d'Enfert C."/>
            <person name="Geysens S."/>
            <person name="Goosen C."/>
            <person name="Groot G.S.P."/>
            <person name="de Groot P.W.J."/>
            <person name="Guillemette T."/>
            <person name="Henrissat B."/>
            <person name="Herweijer M."/>
            <person name="van den Hombergh J.P.T.W."/>
            <person name="van den Hondel C.A.M.J.J."/>
            <person name="van der Heijden R.T.J.M."/>
            <person name="van der Kaaij R.M."/>
            <person name="Klis F.M."/>
            <person name="Kools H.J."/>
            <person name="Kubicek C.P."/>
            <person name="van Kuyk P.A."/>
            <person name="Lauber J."/>
            <person name="Lu X."/>
            <person name="van der Maarel M.J.E.C."/>
            <person name="Meulenberg R."/>
            <person name="Menke H."/>
            <person name="Mortimer M.A."/>
            <person name="Nielsen J."/>
            <person name="Oliver S.G."/>
            <person name="Olsthoorn M."/>
            <person name="Pal K."/>
            <person name="van Peij N.N.M.E."/>
            <person name="Ram A.F.J."/>
            <person name="Rinas U."/>
            <person name="Roubos J.A."/>
            <person name="Sagt C.M.J."/>
            <person name="Schmoll M."/>
            <person name="Sun J."/>
            <person name="Ussery D."/>
            <person name="Varga J."/>
            <person name="Vervecken W."/>
            <person name="van de Vondervoort P.J.J."/>
            <person name="Wedler H."/>
            <person name="Woesten H.A.B."/>
            <person name="Zeng A.-P."/>
            <person name="van Ooyen A.J.J."/>
            <person name="Visser J."/>
            <person name="Stam H."/>
        </authorList>
    </citation>
    <scope>NUCLEOTIDE SEQUENCE [LARGE SCALE GENOMIC DNA]</scope>
    <source>
        <strain>ATCC MYA-4892 / CBS 513.88 / FGSC A1513</strain>
    </source>
</reference>
<gene>
    <name type="primary">efg1</name>
    <name type="ORF">An07g07250</name>
</gene>
<comment type="function">
    <text evidence="1">Involved in rRNA processing.</text>
</comment>
<comment type="subcellular location">
    <subcellularLocation>
        <location evidence="1">Nucleus</location>
        <location evidence="1">Nucleolus</location>
    </subcellularLocation>
</comment>
<comment type="similarity">
    <text evidence="4">Belongs to the EFG1 family.</text>
</comment>
<name>EFG1P_ASPNC</name>
<feature type="chain" id="PRO_0000330261" description="rRNA-processing protein efg1">
    <location>
        <begin position="1"/>
        <end position="316"/>
    </location>
</feature>
<feature type="region of interest" description="Disordered" evidence="3">
    <location>
        <begin position="1"/>
        <end position="44"/>
    </location>
</feature>
<feature type="region of interest" description="Disordered" evidence="3">
    <location>
        <begin position="237"/>
        <end position="316"/>
    </location>
</feature>
<feature type="coiled-coil region" evidence="2">
    <location>
        <begin position="48"/>
        <end position="98"/>
    </location>
</feature>
<feature type="coiled-coil region" evidence="2">
    <location>
        <begin position="139"/>
        <end position="160"/>
    </location>
</feature>
<feature type="compositionally biased region" description="Basic residues" evidence="3">
    <location>
        <begin position="33"/>
        <end position="44"/>
    </location>
</feature>
<feature type="compositionally biased region" description="Basic and acidic residues" evidence="3">
    <location>
        <begin position="237"/>
        <end position="265"/>
    </location>
</feature>
<feature type="compositionally biased region" description="Basic and acidic residues" evidence="3">
    <location>
        <begin position="275"/>
        <end position="302"/>
    </location>
</feature>
<accession>A2QNW5</accession>
<evidence type="ECO:0000250" key="1"/>
<evidence type="ECO:0000255" key="2"/>
<evidence type="ECO:0000256" key="3">
    <source>
        <dbReference type="SAM" id="MobiDB-lite"/>
    </source>
</evidence>
<evidence type="ECO:0000305" key="4"/>
<sequence length="316" mass="35571">MPREYAPAHRKRKSHDISDDADAAAAPGAGAGPRKKILLPKKEHKYPSVNELKKRIRDVKRLLNKADLPADARIVQERALSGYEKELEDELKRRDRSKMIKKYHFVRFLDRKTATKDVNRLVRREKEVSSAGPDAMDTKTKEKKLASLAEKLRVARVNLNYTIYYPLDEKYIALYAEQKKKVKGDGAEDGGDGADSDGDARFGMVHATVADKPAMWHVVEKCMKDGTLDMLRDGKLESGAKAGEKDRKKEERSQRAGDKAKKSQERGVSSSQAGKSRDRSRKVDDRKRSRGPAEDHVMRDAGNDDGDESDGGFFEM</sequence>
<proteinExistence type="inferred from homology"/>
<dbReference type="EMBL" id="AM270138">
    <property type="protein sequence ID" value="CAL00767.1"/>
    <property type="molecule type" value="Genomic_DNA"/>
</dbReference>
<dbReference type="RefSeq" id="XP_001391799.1">
    <property type="nucleotide sequence ID" value="XM_001391762.1"/>
</dbReference>
<dbReference type="SMR" id="A2QNW5"/>
<dbReference type="EnsemblFungi" id="CAL00767">
    <property type="protein sequence ID" value="CAL00767"/>
    <property type="gene ID" value="An07g07250"/>
</dbReference>
<dbReference type="GeneID" id="4981993"/>
<dbReference type="KEGG" id="ang:An07g07250"/>
<dbReference type="HOGENOM" id="CLU_066912_0_0_1"/>
<dbReference type="Proteomes" id="UP000006706">
    <property type="component" value="Chromosome 4L"/>
</dbReference>
<dbReference type="GO" id="GO:0005730">
    <property type="term" value="C:nucleolus"/>
    <property type="evidence" value="ECO:0007669"/>
    <property type="project" value="UniProtKB-SubCell"/>
</dbReference>
<dbReference type="GO" id="GO:0030688">
    <property type="term" value="C:preribosome, small subunit precursor"/>
    <property type="evidence" value="ECO:0007669"/>
    <property type="project" value="TreeGrafter"/>
</dbReference>
<dbReference type="GO" id="GO:0000462">
    <property type="term" value="P:maturation of SSU-rRNA from tricistronic rRNA transcript (SSU-rRNA, 5.8S rRNA, LSU-rRNA)"/>
    <property type="evidence" value="ECO:0007669"/>
    <property type="project" value="TreeGrafter"/>
</dbReference>
<dbReference type="InterPro" id="IPR019310">
    <property type="entry name" value="Efg1"/>
</dbReference>
<dbReference type="InterPro" id="IPR050786">
    <property type="entry name" value="EFG1_rRNA-proc"/>
</dbReference>
<dbReference type="PANTHER" id="PTHR33911">
    <property type="entry name" value="RRNA-PROCESSING PROTEIN EFG1"/>
    <property type="match status" value="1"/>
</dbReference>
<dbReference type="PANTHER" id="PTHR33911:SF1">
    <property type="entry name" value="RRNA-PROCESSING PROTEIN EFG1"/>
    <property type="match status" value="1"/>
</dbReference>
<dbReference type="Pfam" id="PF10153">
    <property type="entry name" value="Efg1"/>
    <property type="match status" value="1"/>
</dbReference>
<protein>
    <recommendedName>
        <fullName>rRNA-processing protein efg1</fullName>
    </recommendedName>
</protein>